<comment type="function">
    <text evidence="1">CGRP1/CALCA is a peptide hormone that induces vasodilation mediated by the CALCRL-RAMP1 receptor complex. Dilates a variety of vessels including the coronary, cerebral and systemic vasculature. Its abundance in the CNS also points toward a neurotransmitter or neuromodulator role. It also elevates platelet cAMP. CGRP1 can also bind and activate CALCR-RAMP1 (AMYR1) receptor complex.</text>
</comment>
<comment type="subcellular location">
    <subcellularLocation>
        <location evidence="1">Secreted</location>
    </subcellularLocation>
</comment>
<comment type="similarity">
    <text evidence="3">Belongs to the calcitonin family.</text>
</comment>
<accession>P30880</accession>
<gene>
    <name type="primary">CALCA</name>
    <name type="synonym">CALC</name>
</gene>
<dbReference type="SMR" id="P30880"/>
<dbReference type="HOGENOM" id="CLU_122444_1_0_1"/>
<dbReference type="InParanoid" id="P30880"/>
<dbReference type="Proteomes" id="UP000008227">
    <property type="component" value="Unplaced"/>
</dbReference>
<dbReference type="Proteomes" id="UP000314985">
    <property type="component" value="Unplaced"/>
</dbReference>
<dbReference type="Proteomes" id="UP000694570">
    <property type="component" value="Unplaced"/>
</dbReference>
<dbReference type="Proteomes" id="UP000694571">
    <property type="component" value="Unplaced"/>
</dbReference>
<dbReference type="Proteomes" id="UP000694720">
    <property type="component" value="Unplaced"/>
</dbReference>
<dbReference type="Proteomes" id="UP000694722">
    <property type="component" value="Unplaced"/>
</dbReference>
<dbReference type="Proteomes" id="UP000694723">
    <property type="component" value="Unplaced"/>
</dbReference>
<dbReference type="Proteomes" id="UP000694724">
    <property type="component" value="Unplaced"/>
</dbReference>
<dbReference type="Proteomes" id="UP000694725">
    <property type="component" value="Unplaced"/>
</dbReference>
<dbReference type="Proteomes" id="UP000694726">
    <property type="component" value="Unplaced"/>
</dbReference>
<dbReference type="Proteomes" id="UP000694727">
    <property type="component" value="Unplaced"/>
</dbReference>
<dbReference type="Proteomes" id="UP000694728">
    <property type="component" value="Unplaced"/>
</dbReference>
<dbReference type="GO" id="GO:0005576">
    <property type="term" value="C:extracellular region"/>
    <property type="evidence" value="ECO:0007669"/>
    <property type="project" value="UniProtKB-SubCell"/>
</dbReference>
<dbReference type="GO" id="GO:0005179">
    <property type="term" value="F:hormone activity"/>
    <property type="evidence" value="ECO:0007669"/>
    <property type="project" value="UniProtKB-KW"/>
</dbReference>
<dbReference type="GO" id="GO:0007189">
    <property type="term" value="P:adenylate cyclase-activating G protein-coupled receptor signaling pathway"/>
    <property type="evidence" value="ECO:0000314"/>
    <property type="project" value="UniProtKB"/>
</dbReference>
<dbReference type="GO" id="GO:1990408">
    <property type="term" value="P:calcitonin gene-related peptide receptor signaling pathway"/>
    <property type="evidence" value="ECO:0000314"/>
    <property type="project" value="UniProtKB"/>
</dbReference>
<dbReference type="Gene3D" id="6.10.250.2190">
    <property type="match status" value="1"/>
</dbReference>
<dbReference type="InterPro" id="IPR021117">
    <property type="entry name" value="Calcitonin-like"/>
</dbReference>
<dbReference type="InterPro" id="IPR021116">
    <property type="entry name" value="Calcitonin/adrenomedullin"/>
</dbReference>
<dbReference type="InterPro" id="IPR018360">
    <property type="entry name" value="Calcitonin_CS"/>
</dbReference>
<dbReference type="InterPro" id="IPR015476">
    <property type="entry name" value="Calcitonin_gene-rel_peptide"/>
</dbReference>
<dbReference type="InterPro" id="IPR001693">
    <property type="entry name" value="Calcitonin_peptide-like"/>
</dbReference>
<dbReference type="PANTHER" id="PTHR10505:SF3">
    <property type="entry name" value="CALCITONIN GENE-RELATED PEPTIDE 2"/>
    <property type="match status" value="1"/>
</dbReference>
<dbReference type="PANTHER" id="PTHR10505">
    <property type="entry name" value="CALCITONIN-RELATED"/>
    <property type="match status" value="1"/>
</dbReference>
<dbReference type="Pfam" id="PF00214">
    <property type="entry name" value="Calc_CGRP_IAPP"/>
    <property type="match status" value="1"/>
</dbReference>
<dbReference type="PRINTS" id="PR00817">
    <property type="entry name" value="CALCITONINB"/>
</dbReference>
<dbReference type="SMART" id="SM00113">
    <property type="entry name" value="CALCITONIN"/>
    <property type="match status" value="1"/>
</dbReference>
<dbReference type="PROSITE" id="PS00258">
    <property type="entry name" value="CALCITONIN"/>
    <property type="match status" value="1"/>
</dbReference>
<proteinExistence type="evidence at protein level"/>
<feature type="peptide" id="PRO_0000044667" description="Calcitonin gene-related peptide 1">
    <location>
        <begin position="1"/>
        <end position="37"/>
    </location>
</feature>
<feature type="modified residue" description="Phenylalanine amide" evidence="2">
    <location>
        <position position="37"/>
    </location>
</feature>
<feature type="disulfide bond" evidence="1">
    <location>
        <begin position="2"/>
        <end position="7"/>
    </location>
</feature>
<reference key="1">
    <citation type="journal article" date="1987" name="Neuropeptides">
        <title>Isolation and amino acid sequence of calcitonin gene related peptide from porcine spinal cord.</title>
        <authorList>
            <person name="Kimura S."/>
            <person name="Sugita Y."/>
            <person name="Kanazawa I."/>
            <person name="Saito A."/>
            <person name="Goto K."/>
        </authorList>
    </citation>
    <scope>PROTEIN SEQUENCE</scope>
    <scope>AMIDATION AT PHE-37</scope>
</reference>
<keyword id="KW-0027">Amidation</keyword>
<keyword id="KW-0903">Direct protein sequencing</keyword>
<keyword id="KW-1015">Disulfide bond</keyword>
<keyword id="KW-0372">Hormone</keyword>
<keyword id="KW-1185">Reference proteome</keyword>
<keyword id="KW-0964">Secreted</keyword>
<name>CALCA_PIG</name>
<organism>
    <name type="scientific">Sus scrofa</name>
    <name type="common">Pig</name>
    <dbReference type="NCBI Taxonomy" id="9823"/>
    <lineage>
        <taxon>Eukaryota</taxon>
        <taxon>Metazoa</taxon>
        <taxon>Chordata</taxon>
        <taxon>Craniata</taxon>
        <taxon>Vertebrata</taxon>
        <taxon>Euteleostomi</taxon>
        <taxon>Mammalia</taxon>
        <taxon>Eutheria</taxon>
        <taxon>Laurasiatheria</taxon>
        <taxon>Artiodactyla</taxon>
        <taxon>Suina</taxon>
        <taxon>Suidae</taxon>
        <taxon>Sus</taxon>
    </lineage>
</organism>
<sequence>SCNTATCVTHRLAGLLSRSGGMVKSNFVPTDVGSEAF</sequence>
<evidence type="ECO:0000250" key="1">
    <source>
        <dbReference type="UniProtKB" id="P06881"/>
    </source>
</evidence>
<evidence type="ECO:0000269" key="2">
    <source>
    </source>
</evidence>
<evidence type="ECO:0000305" key="3"/>
<protein>
    <recommendedName>
        <fullName>Calcitonin gene-related peptide 1</fullName>
        <shortName evidence="1">CGRP1</shortName>
    </recommendedName>
    <alternativeName>
        <fullName>Calcitonin gene-related peptide</fullName>
        <shortName>CGRP</shortName>
    </alternativeName>
</protein>